<sequence>MLKKQFIVYGLVQGVGFRYFTWKTAMQIGVKGYVRNRDDGSVEVVAVGSTTQLAQLHTWLTQGPRTASVEQVIEQEYADSREFTDFSVRY</sequence>
<keyword id="KW-0378">Hydrolase</keyword>
<keyword id="KW-1185">Reference proteome</keyword>
<protein>
    <recommendedName>
        <fullName>Acylphosphatase</fullName>
        <ecNumber>3.6.1.7</ecNumber>
    </recommendedName>
    <alternativeName>
        <fullName>Acylphosphate phosphohydrolase</fullName>
    </alternativeName>
</protein>
<dbReference type="EC" id="3.6.1.7"/>
<dbReference type="EMBL" id="AE004439">
    <property type="protein sequence ID" value="AAK02480.1"/>
    <property type="status" value="ALT_INIT"/>
    <property type="molecule type" value="Genomic_DNA"/>
</dbReference>
<dbReference type="RefSeq" id="WP_005726093.1">
    <property type="nucleotide sequence ID" value="NC_002663.1"/>
</dbReference>
<dbReference type="SMR" id="Q9CNN1"/>
<dbReference type="STRING" id="272843.PM0396"/>
<dbReference type="EnsemblBacteria" id="AAK02480">
    <property type="protein sequence ID" value="AAK02480"/>
    <property type="gene ID" value="PM0396"/>
</dbReference>
<dbReference type="KEGG" id="pmu:PM0396"/>
<dbReference type="PATRIC" id="fig|272843.6.peg.409"/>
<dbReference type="HOGENOM" id="CLU_141932_1_2_6"/>
<dbReference type="OrthoDB" id="5295388at2"/>
<dbReference type="Proteomes" id="UP000000809">
    <property type="component" value="Chromosome"/>
</dbReference>
<dbReference type="GO" id="GO:0003998">
    <property type="term" value="F:acylphosphatase activity"/>
    <property type="evidence" value="ECO:0007669"/>
    <property type="project" value="UniProtKB-EC"/>
</dbReference>
<dbReference type="Gene3D" id="3.30.70.100">
    <property type="match status" value="1"/>
</dbReference>
<dbReference type="InterPro" id="IPR020456">
    <property type="entry name" value="Acylphosphatase"/>
</dbReference>
<dbReference type="InterPro" id="IPR001792">
    <property type="entry name" value="Acylphosphatase-like_dom"/>
</dbReference>
<dbReference type="InterPro" id="IPR036046">
    <property type="entry name" value="Acylphosphatase-like_dom_sf"/>
</dbReference>
<dbReference type="InterPro" id="IPR017968">
    <property type="entry name" value="Acylphosphatase_CS"/>
</dbReference>
<dbReference type="NCBIfam" id="NF011000">
    <property type="entry name" value="PRK14426.1"/>
    <property type="match status" value="1"/>
</dbReference>
<dbReference type="NCBIfam" id="NF011019">
    <property type="entry name" value="PRK14448.1"/>
    <property type="match status" value="1"/>
</dbReference>
<dbReference type="PANTHER" id="PTHR47268">
    <property type="entry name" value="ACYLPHOSPHATASE"/>
    <property type="match status" value="1"/>
</dbReference>
<dbReference type="PANTHER" id="PTHR47268:SF4">
    <property type="entry name" value="ACYLPHOSPHATASE"/>
    <property type="match status" value="1"/>
</dbReference>
<dbReference type="Pfam" id="PF00708">
    <property type="entry name" value="Acylphosphatase"/>
    <property type="match status" value="1"/>
</dbReference>
<dbReference type="SUPFAM" id="SSF54975">
    <property type="entry name" value="Acylphosphatase/BLUF domain-like"/>
    <property type="match status" value="1"/>
</dbReference>
<dbReference type="PROSITE" id="PS00150">
    <property type="entry name" value="ACYLPHOSPHATASE_1"/>
    <property type="match status" value="1"/>
</dbReference>
<dbReference type="PROSITE" id="PS00151">
    <property type="entry name" value="ACYLPHOSPHATASE_2"/>
    <property type="match status" value="1"/>
</dbReference>
<dbReference type="PROSITE" id="PS51160">
    <property type="entry name" value="ACYLPHOSPHATASE_3"/>
    <property type="match status" value="1"/>
</dbReference>
<organism>
    <name type="scientific">Pasteurella multocida (strain Pm70)</name>
    <dbReference type="NCBI Taxonomy" id="272843"/>
    <lineage>
        <taxon>Bacteria</taxon>
        <taxon>Pseudomonadati</taxon>
        <taxon>Pseudomonadota</taxon>
        <taxon>Gammaproteobacteria</taxon>
        <taxon>Pasteurellales</taxon>
        <taxon>Pasteurellaceae</taxon>
        <taxon>Pasteurella</taxon>
    </lineage>
</organism>
<evidence type="ECO:0000255" key="1">
    <source>
        <dbReference type="PROSITE-ProRule" id="PRU00520"/>
    </source>
</evidence>
<evidence type="ECO:0000305" key="2"/>
<comment type="catalytic activity">
    <reaction>
        <text>an acyl phosphate + H2O = a carboxylate + phosphate + H(+)</text>
        <dbReference type="Rhea" id="RHEA:14965"/>
        <dbReference type="ChEBI" id="CHEBI:15377"/>
        <dbReference type="ChEBI" id="CHEBI:15378"/>
        <dbReference type="ChEBI" id="CHEBI:29067"/>
        <dbReference type="ChEBI" id="CHEBI:43474"/>
        <dbReference type="ChEBI" id="CHEBI:59918"/>
        <dbReference type="EC" id="3.6.1.7"/>
    </reaction>
</comment>
<comment type="similarity">
    <text evidence="2">Belongs to the acylphosphatase family.</text>
</comment>
<comment type="sequence caution" evidence="2">
    <conflict type="erroneous initiation">
        <sequence resource="EMBL-CDS" id="AAK02480"/>
    </conflict>
</comment>
<reference key="1">
    <citation type="journal article" date="2001" name="Proc. Natl. Acad. Sci. U.S.A.">
        <title>Complete genomic sequence of Pasteurella multocida Pm70.</title>
        <authorList>
            <person name="May B.J."/>
            <person name="Zhang Q."/>
            <person name="Li L.L."/>
            <person name="Paustian M.L."/>
            <person name="Whittam T.S."/>
            <person name="Kapur V."/>
        </authorList>
    </citation>
    <scope>NUCLEOTIDE SEQUENCE [LARGE SCALE GENOMIC DNA]</scope>
    <source>
        <strain>Pm70</strain>
    </source>
</reference>
<feature type="chain" id="PRO_0000326763" description="Acylphosphatase">
    <location>
        <begin position="1"/>
        <end position="90"/>
    </location>
</feature>
<feature type="domain" description="Acylphosphatase-like" evidence="1">
    <location>
        <begin position="3"/>
        <end position="90"/>
    </location>
</feature>
<feature type="active site" evidence="1">
    <location>
        <position position="18"/>
    </location>
</feature>
<feature type="active site" evidence="1">
    <location>
        <position position="36"/>
    </location>
</feature>
<gene>
    <name type="primary">acyP</name>
    <name type="ordered locus">PM0396</name>
</gene>
<name>ACYP_PASMU</name>
<accession>Q9CNN1</accession>
<proteinExistence type="inferred from homology"/>